<gene>
    <name evidence="1" type="primary">rnpA</name>
    <name type="ordered locus">lpl2932</name>
</gene>
<dbReference type="EC" id="3.1.26.5" evidence="1"/>
<dbReference type="EMBL" id="CR628337">
    <property type="protein sequence ID" value="CAH17176.1"/>
    <property type="molecule type" value="Genomic_DNA"/>
</dbReference>
<dbReference type="RefSeq" id="WP_011216836.1">
    <property type="nucleotide sequence ID" value="NC_006369.1"/>
</dbReference>
<dbReference type="SMR" id="Q5WSE7"/>
<dbReference type="KEGG" id="lpf:lpl2932"/>
<dbReference type="LegioList" id="lpl2932"/>
<dbReference type="HOGENOM" id="CLU_117179_11_0_6"/>
<dbReference type="Proteomes" id="UP000002517">
    <property type="component" value="Chromosome"/>
</dbReference>
<dbReference type="GO" id="GO:0030677">
    <property type="term" value="C:ribonuclease P complex"/>
    <property type="evidence" value="ECO:0007669"/>
    <property type="project" value="TreeGrafter"/>
</dbReference>
<dbReference type="GO" id="GO:0042781">
    <property type="term" value="F:3'-tRNA processing endoribonuclease activity"/>
    <property type="evidence" value="ECO:0007669"/>
    <property type="project" value="TreeGrafter"/>
</dbReference>
<dbReference type="GO" id="GO:0004526">
    <property type="term" value="F:ribonuclease P activity"/>
    <property type="evidence" value="ECO:0007669"/>
    <property type="project" value="UniProtKB-UniRule"/>
</dbReference>
<dbReference type="GO" id="GO:0000049">
    <property type="term" value="F:tRNA binding"/>
    <property type="evidence" value="ECO:0007669"/>
    <property type="project" value="UniProtKB-UniRule"/>
</dbReference>
<dbReference type="GO" id="GO:0001682">
    <property type="term" value="P:tRNA 5'-leader removal"/>
    <property type="evidence" value="ECO:0007669"/>
    <property type="project" value="UniProtKB-UniRule"/>
</dbReference>
<dbReference type="Gene3D" id="3.30.230.10">
    <property type="match status" value="1"/>
</dbReference>
<dbReference type="HAMAP" id="MF_00227">
    <property type="entry name" value="RNase_P"/>
    <property type="match status" value="1"/>
</dbReference>
<dbReference type="InterPro" id="IPR020568">
    <property type="entry name" value="Ribosomal_Su5_D2-typ_SF"/>
</dbReference>
<dbReference type="InterPro" id="IPR014721">
    <property type="entry name" value="Ribsml_uS5_D2-typ_fold_subgr"/>
</dbReference>
<dbReference type="InterPro" id="IPR000100">
    <property type="entry name" value="RNase_P"/>
</dbReference>
<dbReference type="InterPro" id="IPR020539">
    <property type="entry name" value="RNase_P_CS"/>
</dbReference>
<dbReference type="NCBIfam" id="TIGR00188">
    <property type="entry name" value="rnpA"/>
    <property type="match status" value="1"/>
</dbReference>
<dbReference type="PANTHER" id="PTHR33992">
    <property type="entry name" value="RIBONUCLEASE P PROTEIN COMPONENT"/>
    <property type="match status" value="1"/>
</dbReference>
<dbReference type="PANTHER" id="PTHR33992:SF1">
    <property type="entry name" value="RIBONUCLEASE P PROTEIN COMPONENT"/>
    <property type="match status" value="1"/>
</dbReference>
<dbReference type="Pfam" id="PF00825">
    <property type="entry name" value="Ribonuclease_P"/>
    <property type="match status" value="1"/>
</dbReference>
<dbReference type="SUPFAM" id="SSF54211">
    <property type="entry name" value="Ribosomal protein S5 domain 2-like"/>
    <property type="match status" value="1"/>
</dbReference>
<dbReference type="PROSITE" id="PS00648">
    <property type="entry name" value="RIBONUCLEASE_P"/>
    <property type="match status" value="1"/>
</dbReference>
<accession>Q5WSE7</accession>
<protein>
    <recommendedName>
        <fullName evidence="1">Ribonuclease P protein component</fullName>
        <shortName evidence="1">RNase P protein</shortName>
        <shortName evidence="1">RNaseP protein</shortName>
        <ecNumber evidence="1">3.1.26.5</ecNumber>
    </recommendedName>
    <alternativeName>
        <fullName evidence="1">Protein C5</fullName>
    </alternativeName>
</protein>
<evidence type="ECO:0000255" key="1">
    <source>
        <dbReference type="HAMAP-Rule" id="MF_00227"/>
    </source>
</evidence>
<proteinExistence type="inferred from homology"/>
<name>RNPA_LEGPL</name>
<comment type="function">
    <text evidence="1">RNaseP catalyzes the removal of the 5'-leader sequence from pre-tRNA to produce the mature 5'-terminus. It can also cleave other RNA substrates such as 4.5S RNA. The protein component plays an auxiliary but essential role in vivo by binding to the 5'-leader sequence and broadening the substrate specificity of the ribozyme.</text>
</comment>
<comment type="catalytic activity">
    <reaction evidence="1">
        <text>Endonucleolytic cleavage of RNA, removing 5'-extranucleotides from tRNA precursor.</text>
        <dbReference type="EC" id="3.1.26.5"/>
    </reaction>
</comment>
<comment type="subunit">
    <text evidence="1">Consists of a catalytic RNA component (M1 or rnpB) and a protein subunit.</text>
</comment>
<comment type="similarity">
    <text evidence="1">Belongs to the RnpA family.</text>
</comment>
<sequence length="114" mass="13275">MFAFKKAQRLLKKNDFDFVFESAKKITTEDFIFLFRENKLGYARLGLALSKKMIAKAHDRNRIKRLLRESFRHTNLPAVDIIILARPGLAKKTNLGINTKLNKTWEKLTSCYGK</sequence>
<reference key="1">
    <citation type="journal article" date="2004" name="Nat. Genet.">
        <title>Evidence in the Legionella pneumophila genome for exploitation of host cell functions and high genome plasticity.</title>
        <authorList>
            <person name="Cazalet C."/>
            <person name="Rusniok C."/>
            <person name="Brueggemann H."/>
            <person name="Zidane N."/>
            <person name="Magnier A."/>
            <person name="Ma L."/>
            <person name="Tichit M."/>
            <person name="Jarraud S."/>
            <person name="Bouchier C."/>
            <person name="Vandenesch F."/>
            <person name="Kunst F."/>
            <person name="Etienne J."/>
            <person name="Glaser P."/>
            <person name="Buchrieser C."/>
        </authorList>
    </citation>
    <scope>NUCLEOTIDE SEQUENCE [LARGE SCALE GENOMIC DNA]</scope>
    <source>
        <strain>Lens</strain>
    </source>
</reference>
<feature type="chain" id="PRO_0000198477" description="Ribonuclease P protein component">
    <location>
        <begin position="1"/>
        <end position="114"/>
    </location>
</feature>
<organism>
    <name type="scientific">Legionella pneumophila (strain Lens)</name>
    <dbReference type="NCBI Taxonomy" id="297245"/>
    <lineage>
        <taxon>Bacteria</taxon>
        <taxon>Pseudomonadati</taxon>
        <taxon>Pseudomonadota</taxon>
        <taxon>Gammaproteobacteria</taxon>
        <taxon>Legionellales</taxon>
        <taxon>Legionellaceae</taxon>
        <taxon>Legionella</taxon>
    </lineage>
</organism>
<keyword id="KW-0255">Endonuclease</keyword>
<keyword id="KW-0378">Hydrolase</keyword>
<keyword id="KW-0540">Nuclease</keyword>
<keyword id="KW-0694">RNA-binding</keyword>
<keyword id="KW-0819">tRNA processing</keyword>